<proteinExistence type="inferred from homology"/>
<accession>B1KYH7</accession>
<feature type="chain" id="PRO_1000090423" description="UDP-N-acetylglucosamine--N-acetylmuramyl-(pentapeptide) pyrophosphoryl-undecaprenol N-acetylglucosamine transferase">
    <location>
        <begin position="1"/>
        <end position="354"/>
    </location>
</feature>
<feature type="binding site" evidence="1">
    <location>
        <begin position="11"/>
        <end position="13"/>
    </location>
    <ligand>
        <name>UDP-N-acetyl-alpha-D-glucosamine</name>
        <dbReference type="ChEBI" id="CHEBI:57705"/>
    </ligand>
</feature>
<feature type="binding site" evidence="1">
    <location>
        <position position="164"/>
    </location>
    <ligand>
        <name>UDP-N-acetyl-alpha-D-glucosamine</name>
        <dbReference type="ChEBI" id="CHEBI:57705"/>
    </ligand>
</feature>
<feature type="binding site" evidence="1">
    <location>
        <position position="194"/>
    </location>
    <ligand>
        <name>UDP-N-acetyl-alpha-D-glucosamine</name>
        <dbReference type="ChEBI" id="CHEBI:57705"/>
    </ligand>
</feature>
<feature type="binding site" evidence="1">
    <location>
        <position position="289"/>
    </location>
    <ligand>
        <name>UDP-N-acetyl-alpha-D-glucosamine</name>
        <dbReference type="ChEBI" id="CHEBI:57705"/>
    </ligand>
</feature>
<gene>
    <name evidence="1" type="primary">murG</name>
    <name type="ordered locus">CLK_2146</name>
</gene>
<sequence length="354" mass="39668">MKKIIMTGGGTAGHVTPNLALVPELKKLGYEIKYIGSIEGIERKIIEREGIEYFPISSGKLRRYFDLKNFSDPFKVLKGVFQAKKIIKREKPDIVFSKGGFVTVPVVIAAHLNKIPVIAHESDITPGLANKLATPYCTRVCVTFPESVKHIKGDKAVLTGTPIRRELLEGNKLEGIKLCGFKDNKPILLIIGGSLGSKVINEIVRKNLDNILSKFNIIHICGKSNLDENLENRKGYVQFEYVNEELPDLMKASDLVISRAGANVIYELLALKKPNLLIPLSKKSSRGDQILNAASFEKSGYSLVLKEEELEDKTLMKKLNYLYENRNVYINNMSKSKMDNGVKNITELIKKYTK</sequence>
<comment type="function">
    <text evidence="1">Cell wall formation. Catalyzes the transfer of a GlcNAc subunit on undecaprenyl-pyrophosphoryl-MurNAc-pentapeptide (lipid intermediate I) to form undecaprenyl-pyrophosphoryl-MurNAc-(pentapeptide)GlcNAc (lipid intermediate II).</text>
</comment>
<comment type="catalytic activity">
    <reaction evidence="1">
        <text>di-trans,octa-cis-undecaprenyl diphospho-N-acetyl-alpha-D-muramoyl-L-alanyl-D-glutamyl-meso-2,6-diaminopimeloyl-D-alanyl-D-alanine + UDP-N-acetyl-alpha-D-glucosamine = di-trans,octa-cis-undecaprenyl diphospho-[N-acetyl-alpha-D-glucosaminyl-(1-&gt;4)]-N-acetyl-alpha-D-muramoyl-L-alanyl-D-glutamyl-meso-2,6-diaminopimeloyl-D-alanyl-D-alanine + UDP + H(+)</text>
        <dbReference type="Rhea" id="RHEA:31227"/>
        <dbReference type="ChEBI" id="CHEBI:15378"/>
        <dbReference type="ChEBI" id="CHEBI:57705"/>
        <dbReference type="ChEBI" id="CHEBI:58223"/>
        <dbReference type="ChEBI" id="CHEBI:61387"/>
        <dbReference type="ChEBI" id="CHEBI:61388"/>
        <dbReference type="EC" id="2.4.1.227"/>
    </reaction>
</comment>
<comment type="pathway">
    <text evidence="1">Cell wall biogenesis; peptidoglycan biosynthesis.</text>
</comment>
<comment type="subcellular location">
    <subcellularLocation>
        <location evidence="1">Cell membrane</location>
        <topology evidence="1">Peripheral membrane protein</topology>
        <orientation evidence="1">Cytoplasmic side</orientation>
    </subcellularLocation>
</comment>
<comment type="similarity">
    <text evidence="1">Belongs to the glycosyltransferase 28 family. MurG subfamily.</text>
</comment>
<keyword id="KW-0131">Cell cycle</keyword>
<keyword id="KW-0132">Cell division</keyword>
<keyword id="KW-1003">Cell membrane</keyword>
<keyword id="KW-0133">Cell shape</keyword>
<keyword id="KW-0961">Cell wall biogenesis/degradation</keyword>
<keyword id="KW-0328">Glycosyltransferase</keyword>
<keyword id="KW-0472">Membrane</keyword>
<keyword id="KW-0573">Peptidoglycan synthesis</keyword>
<keyword id="KW-0808">Transferase</keyword>
<name>MURG_CLOBM</name>
<reference key="1">
    <citation type="journal article" date="2007" name="PLoS ONE">
        <title>Analysis of the neurotoxin complex genes in Clostridium botulinum A1-A4 and B1 strains: BoNT/A3, /Ba4 and /B1 clusters are located within plasmids.</title>
        <authorList>
            <person name="Smith T.J."/>
            <person name="Hill K.K."/>
            <person name="Foley B.T."/>
            <person name="Detter J.C."/>
            <person name="Munk A.C."/>
            <person name="Bruce D.C."/>
            <person name="Doggett N.A."/>
            <person name="Smith L.A."/>
            <person name="Marks J.D."/>
            <person name="Xie G."/>
            <person name="Brettin T.S."/>
        </authorList>
    </citation>
    <scope>NUCLEOTIDE SEQUENCE [LARGE SCALE GENOMIC DNA]</scope>
    <source>
        <strain>Loch Maree / Type A3</strain>
    </source>
</reference>
<organism>
    <name type="scientific">Clostridium botulinum (strain Loch Maree / Type A3)</name>
    <dbReference type="NCBI Taxonomy" id="498214"/>
    <lineage>
        <taxon>Bacteria</taxon>
        <taxon>Bacillati</taxon>
        <taxon>Bacillota</taxon>
        <taxon>Clostridia</taxon>
        <taxon>Eubacteriales</taxon>
        <taxon>Clostridiaceae</taxon>
        <taxon>Clostridium</taxon>
    </lineage>
</organism>
<evidence type="ECO:0000255" key="1">
    <source>
        <dbReference type="HAMAP-Rule" id="MF_00033"/>
    </source>
</evidence>
<dbReference type="EC" id="2.4.1.227" evidence="1"/>
<dbReference type="EMBL" id="CP000962">
    <property type="protein sequence ID" value="ACA54603.1"/>
    <property type="molecule type" value="Genomic_DNA"/>
</dbReference>
<dbReference type="RefSeq" id="WP_012342686.1">
    <property type="nucleotide sequence ID" value="NC_010520.1"/>
</dbReference>
<dbReference type="SMR" id="B1KYH7"/>
<dbReference type="CAZy" id="GT28">
    <property type="family name" value="Glycosyltransferase Family 28"/>
</dbReference>
<dbReference type="KEGG" id="cbl:CLK_2146"/>
<dbReference type="HOGENOM" id="CLU_037404_0_0_9"/>
<dbReference type="UniPathway" id="UPA00219"/>
<dbReference type="GO" id="GO:0005886">
    <property type="term" value="C:plasma membrane"/>
    <property type="evidence" value="ECO:0007669"/>
    <property type="project" value="UniProtKB-SubCell"/>
</dbReference>
<dbReference type="GO" id="GO:0051991">
    <property type="term" value="F:UDP-N-acetyl-D-glucosamine:N-acetylmuramoyl-L-alanyl-D-glutamyl-meso-2,6-diaminopimelyl-D-alanyl-D-alanine-diphosphoundecaprenol 4-beta-N-acetylglucosaminlytransferase activity"/>
    <property type="evidence" value="ECO:0007669"/>
    <property type="project" value="RHEA"/>
</dbReference>
<dbReference type="GO" id="GO:0050511">
    <property type="term" value="F:undecaprenyldiphospho-muramoylpentapeptide beta-N-acetylglucosaminyltransferase activity"/>
    <property type="evidence" value="ECO:0007669"/>
    <property type="project" value="UniProtKB-UniRule"/>
</dbReference>
<dbReference type="GO" id="GO:0005975">
    <property type="term" value="P:carbohydrate metabolic process"/>
    <property type="evidence" value="ECO:0007669"/>
    <property type="project" value="InterPro"/>
</dbReference>
<dbReference type="GO" id="GO:0051301">
    <property type="term" value="P:cell division"/>
    <property type="evidence" value="ECO:0007669"/>
    <property type="project" value="UniProtKB-KW"/>
</dbReference>
<dbReference type="GO" id="GO:0071555">
    <property type="term" value="P:cell wall organization"/>
    <property type="evidence" value="ECO:0007669"/>
    <property type="project" value="UniProtKB-KW"/>
</dbReference>
<dbReference type="GO" id="GO:0030259">
    <property type="term" value="P:lipid glycosylation"/>
    <property type="evidence" value="ECO:0007669"/>
    <property type="project" value="UniProtKB-UniRule"/>
</dbReference>
<dbReference type="GO" id="GO:0009252">
    <property type="term" value="P:peptidoglycan biosynthetic process"/>
    <property type="evidence" value="ECO:0007669"/>
    <property type="project" value="UniProtKB-UniRule"/>
</dbReference>
<dbReference type="GO" id="GO:0008360">
    <property type="term" value="P:regulation of cell shape"/>
    <property type="evidence" value="ECO:0007669"/>
    <property type="project" value="UniProtKB-KW"/>
</dbReference>
<dbReference type="CDD" id="cd03785">
    <property type="entry name" value="GT28_MurG"/>
    <property type="match status" value="1"/>
</dbReference>
<dbReference type="Gene3D" id="3.40.50.2000">
    <property type="entry name" value="Glycogen Phosphorylase B"/>
    <property type="match status" value="2"/>
</dbReference>
<dbReference type="HAMAP" id="MF_00033">
    <property type="entry name" value="MurG"/>
    <property type="match status" value="1"/>
</dbReference>
<dbReference type="InterPro" id="IPR006009">
    <property type="entry name" value="GlcNAc_MurG"/>
</dbReference>
<dbReference type="InterPro" id="IPR007235">
    <property type="entry name" value="Glyco_trans_28_C"/>
</dbReference>
<dbReference type="InterPro" id="IPR004276">
    <property type="entry name" value="GlycoTrans_28_N"/>
</dbReference>
<dbReference type="NCBIfam" id="TIGR01133">
    <property type="entry name" value="murG"/>
    <property type="match status" value="1"/>
</dbReference>
<dbReference type="NCBIfam" id="NF009102">
    <property type="entry name" value="PRK12446.1"/>
    <property type="match status" value="1"/>
</dbReference>
<dbReference type="PANTHER" id="PTHR21015:SF27">
    <property type="entry name" value="UDP-N-ACETYLGLUCOSAMINE--N-ACETYLMURAMYL-(PENTAPEPTIDE) PYROPHOSPHORYL-UNDECAPRENOL N-ACETYLGLUCOSAMINE TRANSFERASE"/>
    <property type="match status" value="1"/>
</dbReference>
<dbReference type="PANTHER" id="PTHR21015">
    <property type="entry name" value="UDP-N-ACETYLGLUCOSAMINE--N-ACETYLMURAMYL-(PENTAPEPTIDE) PYROPHOSPHORYL-UNDECAPRENOL N-ACETYLGLUCOSAMINE TRANSFERASE 1"/>
    <property type="match status" value="1"/>
</dbReference>
<dbReference type="Pfam" id="PF04101">
    <property type="entry name" value="Glyco_tran_28_C"/>
    <property type="match status" value="1"/>
</dbReference>
<dbReference type="Pfam" id="PF03033">
    <property type="entry name" value="Glyco_transf_28"/>
    <property type="match status" value="1"/>
</dbReference>
<dbReference type="SUPFAM" id="SSF53756">
    <property type="entry name" value="UDP-Glycosyltransferase/glycogen phosphorylase"/>
    <property type="match status" value="1"/>
</dbReference>
<protein>
    <recommendedName>
        <fullName evidence="1">UDP-N-acetylglucosamine--N-acetylmuramyl-(pentapeptide) pyrophosphoryl-undecaprenol N-acetylglucosamine transferase</fullName>
        <ecNumber evidence="1">2.4.1.227</ecNumber>
    </recommendedName>
    <alternativeName>
        <fullName evidence="1">Undecaprenyl-PP-MurNAc-pentapeptide-UDPGlcNAc GlcNAc transferase</fullName>
    </alternativeName>
</protein>